<feature type="chain" id="PRO_0000375383" description="Protein YcgL">
    <location>
        <begin position="1"/>
        <end position="108"/>
    </location>
</feature>
<feature type="domain" description="YcgL" evidence="1">
    <location>
        <begin position="12"/>
        <end position="96"/>
    </location>
</feature>
<organism>
    <name type="scientific">Shigella boydii serotype 4 (strain Sb227)</name>
    <dbReference type="NCBI Taxonomy" id="300268"/>
    <lineage>
        <taxon>Bacteria</taxon>
        <taxon>Pseudomonadati</taxon>
        <taxon>Pseudomonadota</taxon>
        <taxon>Gammaproteobacteria</taxon>
        <taxon>Enterobacterales</taxon>
        <taxon>Enterobacteriaceae</taxon>
        <taxon>Shigella</taxon>
    </lineage>
</organism>
<evidence type="ECO:0000255" key="1">
    <source>
        <dbReference type="HAMAP-Rule" id="MF_01866"/>
    </source>
</evidence>
<dbReference type="EMBL" id="CP000036">
    <property type="protein sequence ID" value="ABB65800.1"/>
    <property type="molecule type" value="Genomic_DNA"/>
</dbReference>
<dbReference type="SMR" id="Q322F8"/>
<dbReference type="KEGG" id="sbo:SBO_1165"/>
<dbReference type="HOGENOM" id="CLU_155118_1_0_6"/>
<dbReference type="Proteomes" id="UP000007067">
    <property type="component" value="Chromosome"/>
</dbReference>
<dbReference type="Gene3D" id="3.10.510.20">
    <property type="entry name" value="YcgL domain"/>
    <property type="match status" value="1"/>
</dbReference>
<dbReference type="HAMAP" id="MF_01866">
    <property type="entry name" value="UPF0745"/>
    <property type="match status" value="1"/>
</dbReference>
<dbReference type="InterPro" id="IPR038068">
    <property type="entry name" value="YcgL-like_sf"/>
</dbReference>
<dbReference type="InterPro" id="IPR027354">
    <property type="entry name" value="YcgL_dom"/>
</dbReference>
<dbReference type="PANTHER" id="PTHR38109">
    <property type="entry name" value="PROTEIN YCGL"/>
    <property type="match status" value="1"/>
</dbReference>
<dbReference type="PANTHER" id="PTHR38109:SF1">
    <property type="entry name" value="PROTEIN YCGL"/>
    <property type="match status" value="1"/>
</dbReference>
<dbReference type="Pfam" id="PF05166">
    <property type="entry name" value="YcgL"/>
    <property type="match status" value="1"/>
</dbReference>
<dbReference type="SUPFAM" id="SSF160191">
    <property type="entry name" value="YcgL-like"/>
    <property type="match status" value="1"/>
</dbReference>
<dbReference type="PROSITE" id="PS51648">
    <property type="entry name" value="YCGL"/>
    <property type="match status" value="1"/>
</dbReference>
<reference key="1">
    <citation type="journal article" date="2005" name="Nucleic Acids Res.">
        <title>Genome dynamics and diversity of Shigella species, the etiologic agents of bacillary dysentery.</title>
        <authorList>
            <person name="Yang F."/>
            <person name="Yang J."/>
            <person name="Zhang X."/>
            <person name="Chen L."/>
            <person name="Jiang Y."/>
            <person name="Yan Y."/>
            <person name="Tang X."/>
            <person name="Wang J."/>
            <person name="Xiong Z."/>
            <person name="Dong J."/>
            <person name="Xue Y."/>
            <person name="Zhu Y."/>
            <person name="Xu X."/>
            <person name="Sun L."/>
            <person name="Chen S."/>
            <person name="Nie H."/>
            <person name="Peng J."/>
            <person name="Xu J."/>
            <person name="Wang Y."/>
            <person name="Yuan Z."/>
            <person name="Wen Y."/>
            <person name="Yao Z."/>
            <person name="Shen Y."/>
            <person name="Qiang B."/>
            <person name="Hou Y."/>
            <person name="Yu J."/>
            <person name="Jin Q."/>
        </authorList>
    </citation>
    <scope>NUCLEOTIDE SEQUENCE [LARGE SCALE GENOMIC DNA]</scope>
    <source>
        <strain>Sb227</strain>
    </source>
</reference>
<name>YCGL_SHIBS</name>
<accession>Q322F8</accession>
<proteinExistence type="inferred from homology"/>
<gene>
    <name evidence="1" type="primary">ycgL</name>
    <name type="ordered locus">SBO_1165</name>
</gene>
<sequence>MPKPGILKSKSMFCVIYRSSKRDQTYLYVEKKDDFSRVPEELMKGFGQPQLAMILPLDGRKKLVNADIEKVKLALTEQGYYLQLPPPPEDLLKQHLSVMGQKTDDTNK</sequence>
<protein>
    <recommendedName>
        <fullName evidence="1">Protein YcgL</fullName>
    </recommendedName>
</protein>